<sequence>MLKPLGDRVVIELVESEEKTASGIVLPDSAKEKPQEGKVVAAGSGRVLESGERVALEVKTGDRIIFSKYAGTEVKYEGTDYLILRESDILAVIG</sequence>
<organism>
    <name type="scientific">Bacillus licheniformis (strain ATCC 14580 / DSM 13 / JCM 2505 / CCUG 7422 / NBRC 12200 / NCIMB 9375 / NCTC 10341 / NRRL NRS-1264 / Gibson 46)</name>
    <dbReference type="NCBI Taxonomy" id="279010"/>
    <lineage>
        <taxon>Bacteria</taxon>
        <taxon>Bacillati</taxon>
        <taxon>Bacillota</taxon>
        <taxon>Bacilli</taxon>
        <taxon>Bacillales</taxon>
        <taxon>Bacillaceae</taxon>
        <taxon>Bacillus</taxon>
    </lineage>
</organism>
<reference key="1">
    <citation type="journal article" date="2004" name="J. Mol. Microbiol. Biotechnol.">
        <title>The complete genome sequence of Bacillus licheniformis DSM13, an organism with great industrial potential.</title>
        <authorList>
            <person name="Veith B."/>
            <person name="Herzberg C."/>
            <person name="Steckel S."/>
            <person name="Feesche J."/>
            <person name="Maurer K.H."/>
            <person name="Ehrenreich P."/>
            <person name="Baeumer S."/>
            <person name="Henne A."/>
            <person name="Liesegang H."/>
            <person name="Merkl R."/>
            <person name="Ehrenreich A."/>
            <person name="Gottschalk G."/>
        </authorList>
    </citation>
    <scope>NUCLEOTIDE SEQUENCE [LARGE SCALE GENOMIC DNA]</scope>
    <source>
        <strain>ATCC 14580 / DSM 13 / JCM 2505 / CCUG 7422 / NBRC 12200 / NCIMB 9375 / NCTC 10341 / NRRL NRS-1264 / Gibson 46</strain>
    </source>
</reference>
<reference key="2">
    <citation type="journal article" date="2004" name="Genome Biol.">
        <title>Complete genome sequence of the industrial bacterium Bacillus licheniformis and comparisons with closely related Bacillus species.</title>
        <authorList>
            <person name="Rey M.W."/>
            <person name="Ramaiya P."/>
            <person name="Nelson B.A."/>
            <person name="Brody-Karpin S.D."/>
            <person name="Zaretsky E.J."/>
            <person name="Tang M."/>
            <person name="Lopez de Leon A."/>
            <person name="Xiang H."/>
            <person name="Gusti V."/>
            <person name="Clausen I.G."/>
            <person name="Olsen P.B."/>
            <person name="Rasmussen M.D."/>
            <person name="Andersen J.T."/>
            <person name="Joergensen P.L."/>
            <person name="Larsen T.S."/>
            <person name="Sorokin A."/>
            <person name="Bolotin A."/>
            <person name="Lapidus A."/>
            <person name="Galleron N."/>
            <person name="Ehrlich S.D."/>
            <person name="Berka R.M."/>
        </authorList>
    </citation>
    <scope>NUCLEOTIDE SEQUENCE [LARGE SCALE GENOMIC DNA]</scope>
    <source>
        <strain>ATCC 14580 / DSM 13 / JCM 2505 / CCUG 7422 / NBRC 12200 / NCIMB 9375 / NCTC 10341 / NRRL NRS-1264 / Gibson 46</strain>
    </source>
</reference>
<accession>Q65MZ9</accession>
<accession>Q62YE6</accession>
<feature type="chain" id="PRO_1000025210" description="Co-chaperonin GroES">
    <location>
        <begin position="1"/>
        <end position="94"/>
    </location>
</feature>
<gene>
    <name evidence="1" type="primary">groES</name>
    <name evidence="1" type="synonym">groS</name>
    <name type="ordered locus">BLi00623</name>
    <name type="ordered locus">BL03284</name>
</gene>
<dbReference type="EMBL" id="CP000002">
    <property type="protein sequence ID" value="AAU22212.1"/>
    <property type="molecule type" value="Genomic_DNA"/>
</dbReference>
<dbReference type="EMBL" id="AE017333">
    <property type="protein sequence ID" value="AAU39565.1"/>
    <property type="molecule type" value="Genomic_DNA"/>
</dbReference>
<dbReference type="RefSeq" id="WP_003179248.1">
    <property type="nucleotide sequence ID" value="NC_006322.1"/>
</dbReference>
<dbReference type="SMR" id="Q65MZ9"/>
<dbReference type="STRING" id="279010.BL03284"/>
<dbReference type="GeneID" id="92862792"/>
<dbReference type="KEGG" id="bld:BLi00623"/>
<dbReference type="KEGG" id="bli:BL03284"/>
<dbReference type="eggNOG" id="COG0234">
    <property type="taxonomic scope" value="Bacteria"/>
</dbReference>
<dbReference type="HOGENOM" id="CLU_132825_2_0_9"/>
<dbReference type="Proteomes" id="UP000000606">
    <property type="component" value="Chromosome"/>
</dbReference>
<dbReference type="GO" id="GO:0005737">
    <property type="term" value="C:cytoplasm"/>
    <property type="evidence" value="ECO:0007669"/>
    <property type="project" value="UniProtKB-SubCell"/>
</dbReference>
<dbReference type="GO" id="GO:0005524">
    <property type="term" value="F:ATP binding"/>
    <property type="evidence" value="ECO:0007669"/>
    <property type="project" value="InterPro"/>
</dbReference>
<dbReference type="GO" id="GO:0046872">
    <property type="term" value="F:metal ion binding"/>
    <property type="evidence" value="ECO:0007669"/>
    <property type="project" value="TreeGrafter"/>
</dbReference>
<dbReference type="GO" id="GO:0044183">
    <property type="term" value="F:protein folding chaperone"/>
    <property type="evidence" value="ECO:0007669"/>
    <property type="project" value="InterPro"/>
</dbReference>
<dbReference type="GO" id="GO:0051087">
    <property type="term" value="F:protein-folding chaperone binding"/>
    <property type="evidence" value="ECO:0007669"/>
    <property type="project" value="TreeGrafter"/>
</dbReference>
<dbReference type="GO" id="GO:0051082">
    <property type="term" value="F:unfolded protein binding"/>
    <property type="evidence" value="ECO:0007669"/>
    <property type="project" value="TreeGrafter"/>
</dbReference>
<dbReference type="GO" id="GO:0051085">
    <property type="term" value="P:chaperone cofactor-dependent protein refolding"/>
    <property type="evidence" value="ECO:0007669"/>
    <property type="project" value="TreeGrafter"/>
</dbReference>
<dbReference type="CDD" id="cd00320">
    <property type="entry name" value="cpn10"/>
    <property type="match status" value="1"/>
</dbReference>
<dbReference type="FunFam" id="2.30.33.40:FF:000001">
    <property type="entry name" value="10 kDa chaperonin"/>
    <property type="match status" value="1"/>
</dbReference>
<dbReference type="Gene3D" id="2.30.33.40">
    <property type="entry name" value="GroES chaperonin"/>
    <property type="match status" value="1"/>
</dbReference>
<dbReference type="HAMAP" id="MF_00580">
    <property type="entry name" value="CH10"/>
    <property type="match status" value="1"/>
</dbReference>
<dbReference type="InterPro" id="IPR020818">
    <property type="entry name" value="Chaperonin_GroES"/>
</dbReference>
<dbReference type="InterPro" id="IPR037124">
    <property type="entry name" value="Chaperonin_GroES_sf"/>
</dbReference>
<dbReference type="InterPro" id="IPR018369">
    <property type="entry name" value="Chaprnonin_Cpn10_CS"/>
</dbReference>
<dbReference type="InterPro" id="IPR011032">
    <property type="entry name" value="GroES-like_sf"/>
</dbReference>
<dbReference type="NCBIfam" id="NF001527">
    <property type="entry name" value="PRK00364.1-2"/>
    <property type="match status" value="1"/>
</dbReference>
<dbReference type="NCBIfam" id="NF001530">
    <property type="entry name" value="PRK00364.1-6"/>
    <property type="match status" value="1"/>
</dbReference>
<dbReference type="NCBIfam" id="NF001531">
    <property type="entry name" value="PRK00364.2-2"/>
    <property type="match status" value="1"/>
</dbReference>
<dbReference type="NCBIfam" id="NF001532">
    <property type="entry name" value="PRK00364.2-3"/>
    <property type="match status" value="1"/>
</dbReference>
<dbReference type="NCBIfam" id="NF001533">
    <property type="entry name" value="PRK00364.2-4"/>
    <property type="match status" value="1"/>
</dbReference>
<dbReference type="NCBIfam" id="NF001534">
    <property type="entry name" value="PRK00364.2-5"/>
    <property type="match status" value="1"/>
</dbReference>
<dbReference type="PANTHER" id="PTHR10772">
    <property type="entry name" value="10 KDA HEAT SHOCK PROTEIN"/>
    <property type="match status" value="1"/>
</dbReference>
<dbReference type="PANTHER" id="PTHR10772:SF58">
    <property type="entry name" value="CO-CHAPERONIN GROES"/>
    <property type="match status" value="1"/>
</dbReference>
<dbReference type="Pfam" id="PF00166">
    <property type="entry name" value="Cpn10"/>
    <property type="match status" value="1"/>
</dbReference>
<dbReference type="PRINTS" id="PR00297">
    <property type="entry name" value="CHAPERONIN10"/>
</dbReference>
<dbReference type="SMART" id="SM00883">
    <property type="entry name" value="Cpn10"/>
    <property type="match status" value="1"/>
</dbReference>
<dbReference type="SUPFAM" id="SSF50129">
    <property type="entry name" value="GroES-like"/>
    <property type="match status" value="1"/>
</dbReference>
<dbReference type="PROSITE" id="PS00681">
    <property type="entry name" value="CHAPERONINS_CPN10"/>
    <property type="match status" value="1"/>
</dbReference>
<comment type="function">
    <text evidence="1">Together with the chaperonin GroEL, plays an essential role in assisting protein folding. The GroEL-GroES system forms a nano-cage that allows encapsulation of the non-native substrate proteins and provides a physical environment optimized to promote and accelerate protein folding. GroES binds to the apical surface of the GroEL ring, thereby capping the opening of the GroEL channel.</text>
</comment>
<comment type="subunit">
    <text evidence="1">Heptamer of 7 subunits arranged in a ring. Interacts with the chaperonin GroEL.</text>
</comment>
<comment type="subcellular location">
    <subcellularLocation>
        <location evidence="1">Cytoplasm</location>
    </subcellularLocation>
</comment>
<comment type="similarity">
    <text evidence="1">Belongs to the GroES chaperonin family.</text>
</comment>
<protein>
    <recommendedName>
        <fullName evidence="1">Co-chaperonin GroES</fullName>
    </recommendedName>
    <alternativeName>
        <fullName evidence="1">10 kDa chaperonin</fullName>
    </alternativeName>
    <alternativeName>
        <fullName evidence="1">Chaperonin-10</fullName>
        <shortName evidence="1">Cpn10</shortName>
    </alternativeName>
</protein>
<proteinExistence type="inferred from homology"/>
<evidence type="ECO:0000255" key="1">
    <source>
        <dbReference type="HAMAP-Rule" id="MF_00580"/>
    </source>
</evidence>
<keyword id="KW-0143">Chaperone</keyword>
<keyword id="KW-0963">Cytoplasm</keyword>
<keyword id="KW-1185">Reference proteome</keyword>
<name>CH10_BACLD</name>